<accession>B0JI00</accession>
<dbReference type="EMBL" id="AP009552">
    <property type="protein sequence ID" value="BAG05562.1"/>
    <property type="molecule type" value="Genomic_DNA"/>
</dbReference>
<dbReference type="RefSeq" id="WP_002796427.1">
    <property type="nucleotide sequence ID" value="NC_010296.1"/>
</dbReference>
<dbReference type="SMR" id="B0JI00"/>
<dbReference type="STRING" id="449447.MAE_57400"/>
<dbReference type="PaxDb" id="449447-MAE_57400"/>
<dbReference type="EnsemblBacteria" id="BAG05562">
    <property type="protein sequence ID" value="BAG05562"/>
    <property type="gene ID" value="MAE_57400"/>
</dbReference>
<dbReference type="GeneID" id="66707898"/>
<dbReference type="KEGG" id="mar:MAE_57400"/>
<dbReference type="eggNOG" id="COG0090">
    <property type="taxonomic scope" value="Bacteria"/>
</dbReference>
<dbReference type="HOGENOM" id="CLU_036235_2_1_3"/>
<dbReference type="BioCyc" id="MAER449447:MAE_RS25015-MONOMER"/>
<dbReference type="Proteomes" id="UP000001510">
    <property type="component" value="Chromosome"/>
</dbReference>
<dbReference type="GO" id="GO:0015934">
    <property type="term" value="C:large ribosomal subunit"/>
    <property type="evidence" value="ECO:0007669"/>
    <property type="project" value="InterPro"/>
</dbReference>
<dbReference type="GO" id="GO:0019843">
    <property type="term" value="F:rRNA binding"/>
    <property type="evidence" value="ECO:0007669"/>
    <property type="project" value="UniProtKB-UniRule"/>
</dbReference>
<dbReference type="GO" id="GO:0003735">
    <property type="term" value="F:structural constituent of ribosome"/>
    <property type="evidence" value="ECO:0007669"/>
    <property type="project" value="InterPro"/>
</dbReference>
<dbReference type="GO" id="GO:0016740">
    <property type="term" value="F:transferase activity"/>
    <property type="evidence" value="ECO:0007669"/>
    <property type="project" value="InterPro"/>
</dbReference>
<dbReference type="GO" id="GO:0006412">
    <property type="term" value="P:translation"/>
    <property type="evidence" value="ECO:0007669"/>
    <property type="project" value="UniProtKB-UniRule"/>
</dbReference>
<dbReference type="FunFam" id="2.30.30.30:FF:000001">
    <property type="entry name" value="50S ribosomal protein L2"/>
    <property type="match status" value="1"/>
</dbReference>
<dbReference type="FunFam" id="2.40.50.140:FF:000003">
    <property type="entry name" value="50S ribosomal protein L2"/>
    <property type="match status" value="1"/>
</dbReference>
<dbReference type="FunFam" id="4.10.950.10:FF:000001">
    <property type="entry name" value="50S ribosomal protein L2"/>
    <property type="match status" value="1"/>
</dbReference>
<dbReference type="Gene3D" id="2.30.30.30">
    <property type="match status" value="1"/>
</dbReference>
<dbReference type="Gene3D" id="2.40.50.140">
    <property type="entry name" value="Nucleic acid-binding proteins"/>
    <property type="match status" value="1"/>
</dbReference>
<dbReference type="Gene3D" id="4.10.950.10">
    <property type="entry name" value="Ribosomal protein L2, domain 3"/>
    <property type="match status" value="1"/>
</dbReference>
<dbReference type="HAMAP" id="MF_01320_B">
    <property type="entry name" value="Ribosomal_uL2_B"/>
    <property type="match status" value="1"/>
</dbReference>
<dbReference type="InterPro" id="IPR012340">
    <property type="entry name" value="NA-bd_OB-fold"/>
</dbReference>
<dbReference type="InterPro" id="IPR014722">
    <property type="entry name" value="Rib_uL2_dom2"/>
</dbReference>
<dbReference type="InterPro" id="IPR002171">
    <property type="entry name" value="Ribosomal_uL2"/>
</dbReference>
<dbReference type="InterPro" id="IPR005880">
    <property type="entry name" value="Ribosomal_uL2_bac/org-type"/>
</dbReference>
<dbReference type="InterPro" id="IPR022669">
    <property type="entry name" value="Ribosomal_uL2_C"/>
</dbReference>
<dbReference type="InterPro" id="IPR022671">
    <property type="entry name" value="Ribosomal_uL2_CS"/>
</dbReference>
<dbReference type="InterPro" id="IPR014726">
    <property type="entry name" value="Ribosomal_uL2_dom3"/>
</dbReference>
<dbReference type="InterPro" id="IPR022666">
    <property type="entry name" value="Ribosomal_uL2_RNA-bd_dom"/>
</dbReference>
<dbReference type="InterPro" id="IPR008991">
    <property type="entry name" value="Translation_prot_SH3-like_sf"/>
</dbReference>
<dbReference type="NCBIfam" id="TIGR01171">
    <property type="entry name" value="rplB_bact"/>
    <property type="match status" value="1"/>
</dbReference>
<dbReference type="PANTHER" id="PTHR13691:SF5">
    <property type="entry name" value="LARGE RIBOSOMAL SUBUNIT PROTEIN UL2M"/>
    <property type="match status" value="1"/>
</dbReference>
<dbReference type="PANTHER" id="PTHR13691">
    <property type="entry name" value="RIBOSOMAL PROTEIN L2"/>
    <property type="match status" value="1"/>
</dbReference>
<dbReference type="Pfam" id="PF00181">
    <property type="entry name" value="Ribosomal_L2"/>
    <property type="match status" value="1"/>
</dbReference>
<dbReference type="Pfam" id="PF03947">
    <property type="entry name" value="Ribosomal_L2_C"/>
    <property type="match status" value="1"/>
</dbReference>
<dbReference type="PIRSF" id="PIRSF002158">
    <property type="entry name" value="Ribosomal_L2"/>
    <property type="match status" value="1"/>
</dbReference>
<dbReference type="SMART" id="SM01383">
    <property type="entry name" value="Ribosomal_L2"/>
    <property type="match status" value="1"/>
</dbReference>
<dbReference type="SMART" id="SM01382">
    <property type="entry name" value="Ribosomal_L2_C"/>
    <property type="match status" value="1"/>
</dbReference>
<dbReference type="SUPFAM" id="SSF50249">
    <property type="entry name" value="Nucleic acid-binding proteins"/>
    <property type="match status" value="1"/>
</dbReference>
<dbReference type="SUPFAM" id="SSF50104">
    <property type="entry name" value="Translation proteins SH3-like domain"/>
    <property type="match status" value="1"/>
</dbReference>
<dbReference type="PROSITE" id="PS00467">
    <property type="entry name" value="RIBOSOMAL_L2"/>
    <property type="match status" value="1"/>
</dbReference>
<evidence type="ECO:0000255" key="1">
    <source>
        <dbReference type="HAMAP-Rule" id="MF_01320"/>
    </source>
</evidence>
<evidence type="ECO:0000256" key="2">
    <source>
        <dbReference type="SAM" id="MobiDB-lite"/>
    </source>
</evidence>
<evidence type="ECO:0000305" key="3"/>
<organism>
    <name type="scientific">Microcystis aeruginosa (strain NIES-843 / IAM M-2473)</name>
    <dbReference type="NCBI Taxonomy" id="449447"/>
    <lineage>
        <taxon>Bacteria</taxon>
        <taxon>Bacillati</taxon>
        <taxon>Cyanobacteriota</taxon>
        <taxon>Cyanophyceae</taxon>
        <taxon>Oscillatoriophycideae</taxon>
        <taxon>Chroococcales</taxon>
        <taxon>Microcystaceae</taxon>
        <taxon>Microcystis</taxon>
    </lineage>
</organism>
<protein>
    <recommendedName>
        <fullName evidence="1">Large ribosomal subunit protein uL2</fullName>
    </recommendedName>
    <alternativeName>
        <fullName evidence="3">50S ribosomal protein L2</fullName>
    </alternativeName>
</protein>
<comment type="function">
    <text evidence="1">One of the primary rRNA binding proteins. Required for association of the 30S and 50S subunits to form the 70S ribosome, for tRNA binding and peptide bond formation. It has been suggested to have peptidyltransferase activity; this is somewhat controversial. Makes several contacts with the 16S rRNA in the 70S ribosome.</text>
</comment>
<comment type="subunit">
    <text evidence="1">Part of the 50S ribosomal subunit. Forms a bridge to the 30S subunit in the 70S ribosome.</text>
</comment>
<comment type="similarity">
    <text evidence="1">Belongs to the universal ribosomal protein uL2 family.</text>
</comment>
<sequence>MGIRSFRPLTPGTRQAAISDFKEITKTEPEKSLTHHKHSKQGRNNRGVVTSRHRGGGHKRLYRIIDFRRDKRDIPAKVAAIEYDPNRNARIALLFYKDGEKRYIIAPAGLGVGDTVIAGENAPFEVGNALPLSRIPLGTEVHNIELVPGRGGQMVRAAGGFAQVVAKEGDYVTIRLPSKEVRMIRRECYATIGKVGNAEARNISLGKAGRTRHRGQRPHVRGSVMNPVDHPHGGGEGRAPIGRSGPMTPWGKPALGRKTRNKKKRSSDLIVRRRTQG</sequence>
<feature type="chain" id="PRO_1000086337" description="Large ribosomal subunit protein uL2">
    <location>
        <begin position="1"/>
        <end position="277"/>
    </location>
</feature>
<feature type="region of interest" description="Disordered" evidence="2">
    <location>
        <begin position="28"/>
        <end position="55"/>
    </location>
</feature>
<feature type="region of interest" description="Disordered" evidence="2">
    <location>
        <begin position="207"/>
        <end position="277"/>
    </location>
</feature>
<feature type="compositionally biased region" description="Basic residues" evidence="2">
    <location>
        <begin position="34"/>
        <end position="43"/>
    </location>
</feature>
<feature type="compositionally biased region" description="Basic residues" evidence="2">
    <location>
        <begin position="209"/>
        <end position="220"/>
    </location>
</feature>
<feature type="compositionally biased region" description="Basic residues" evidence="2">
    <location>
        <begin position="255"/>
        <end position="265"/>
    </location>
</feature>
<reference key="1">
    <citation type="journal article" date="2007" name="DNA Res.">
        <title>Complete genomic structure of the bloom-forming toxic cyanobacterium Microcystis aeruginosa NIES-843.</title>
        <authorList>
            <person name="Kaneko T."/>
            <person name="Nakajima N."/>
            <person name="Okamoto S."/>
            <person name="Suzuki I."/>
            <person name="Tanabe Y."/>
            <person name="Tamaoki M."/>
            <person name="Nakamura Y."/>
            <person name="Kasai F."/>
            <person name="Watanabe A."/>
            <person name="Kawashima K."/>
            <person name="Kishida Y."/>
            <person name="Ono A."/>
            <person name="Shimizu Y."/>
            <person name="Takahashi C."/>
            <person name="Minami C."/>
            <person name="Fujishiro T."/>
            <person name="Kohara M."/>
            <person name="Katoh M."/>
            <person name="Nakazaki N."/>
            <person name="Nakayama S."/>
            <person name="Yamada M."/>
            <person name="Tabata S."/>
            <person name="Watanabe M.M."/>
        </authorList>
    </citation>
    <scope>NUCLEOTIDE SEQUENCE [LARGE SCALE GENOMIC DNA]</scope>
    <source>
        <strain>NIES-843 / IAM M-247</strain>
    </source>
</reference>
<proteinExistence type="inferred from homology"/>
<gene>
    <name evidence="1" type="primary">rplB</name>
    <name evidence="1" type="synonym">rpl2</name>
    <name type="ordered locus">MAE_57400</name>
</gene>
<name>RL2_MICAN</name>
<keyword id="KW-0687">Ribonucleoprotein</keyword>
<keyword id="KW-0689">Ribosomal protein</keyword>
<keyword id="KW-0694">RNA-binding</keyword>
<keyword id="KW-0699">rRNA-binding</keyword>